<name>YP145_YEAST</name>
<organism>
    <name type="scientific">Saccharomyces cerevisiae (strain ATCC 204508 / S288c)</name>
    <name type="common">Baker's yeast</name>
    <dbReference type="NCBI Taxonomy" id="559292"/>
    <lineage>
        <taxon>Eukaryota</taxon>
        <taxon>Fungi</taxon>
        <taxon>Dikarya</taxon>
        <taxon>Ascomycota</taxon>
        <taxon>Saccharomycotina</taxon>
        <taxon>Saccharomycetes</taxon>
        <taxon>Saccharomycetales</taxon>
        <taxon>Saccharomycetaceae</taxon>
        <taxon>Saccharomyces</taxon>
    </lineage>
</organism>
<reference key="1">
    <citation type="journal article" date="1997" name="Nature">
        <title>The nucleotide sequence of Saccharomyces cerevisiae chromosome XVI.</title>
        <authorList>
            <person name="Bussey H."/>
            <person name="Storms R.K."/>
            <person name="Ahmed A."/>
            <person name="Albermann K."/>
            <person name="Allen E."/>
            <person name="Ansorge W."/>
            <person name="Araujo R."/>
            <person name="Aparicio A."/>
            <person name="Barrell B.G."/>
            <person name="Badcock K."/>
            <person name="Benes V."/>
            <person name="Botstein D."/>
            <person name="Bowman S."/>
            <person name="Brueckner M."/>
            <person name="Carpenter J."/>
            <person name="Cherry J.M."/>
            <person name="Chung E."/>
            <person name="Churcher C.M."/>
            <person name="Coster F."/>
            <person name="Davis K."/>
            <person name="Davis R.W."/>
            <person name="Dietrich F.S."/>
            <person name="Delius H."/>
            <person name="DiPaolo T."/>
            <person name="Dubois E."/>
            <person name="Duesterhoeft A."/>
            <person name="Duncan M."/>
            <person name="Floeth M."/>
            <person name="Fortin N."/>
            <person name="Friesen J.D."/>
            <person name="Fritz C."/>
            <person name="Goffeau A."/>
            <person name="Hall J."/>
            <person name="Hebling U."/>
            <person name="Heumann K."/>
            <person name="Hilbert H."/>
            <person name="Hillier L.W."/>
            <person name="Hunicke-Smith S."/>
            <person name="Hyman R.W."/>
            <person name="Johnston M."/>
            <person name="Kalman S."/>
            <person name="Kleine K."/>
            <person name="Komp C."/>
            <person name="Kurdi O."/>
            <person name="Lashkari D."/>
            <person name="Lew H."/>
            <person name="Lin A."/>
            <person name="Lin D."/>
            <person name="Louis E.J."/>
            <person name="Marathe R."/>
            <person name="Messenguy F."/>
            <person name="Mewes H.-W."/>
            <person name="Mirtipati S."/>
            <person name="Moestl D."/>
            <person name="Mueller-Auer S."/>
            <person name="Namath A."/>
            <person name="Nentwich U."/>
            <person name="Oefner P."/>
            <person name="Pearson D."/>
            <person name="Petel F.X."/>
            <person name="Pohl T.M."/>
            <person name="Purnelle B."/>
            <person name="Rajandream M.A."/>
            <person name="Rechmann S."/>
            <person name="Rieger M."/>
            <person name="Riles L."/>
            <person name="Roberts D."/>
            <person name="Schaefer M."/>
            <person name="Scharfe M."/>
            <person name="Scherens B."/>
            <person name="Schramm S."/>
            <person name="Schroeder M."/>
            <person name="Sdicu A.-M."/>
            <person name="Tettelin H."/>
            <person name="Urrestarazu L.A."/>
            <person name="Ushinsky S."/>
            <person name="Vierendeels F."/>
            <person name="Vissers S."/>
            <person name="Voss H."/>
            <person name="Walsh S.V."/>
            <person name="Wambutt R."/>
            <person name="Wang Y."/>
            <person name="Wedler E."/>
            <person name="Wedler H."/>
            <person name="Winnett E."/>
            <person name="Zhong W.-W."/>
            <person name="Zollner A."/>
            <person name="Vo D.H."/>
            <person name="Hani J."/>
        </authorList>
    </citation>
    <scope>NUCLEOTIDE SEQUENCE [LARGE SCALE GENOMIC DNA]</scope>
    <source>
        <strain>ATCC 204508 / S288c</strain>
    </source>
</reference>
<reference key="2">
    <citation type="journal article" date="2014" name="G3 (Bethesda)">
        <title>The reference genome sequence of Saccharomyces cerevisiae: Then and now.</title>
        <authorList>
            <person name="Engel S.R."/>
            <person name="Dietrich F.S."/>
            <person name="Fisk D.G."/>
            <person name="Binkley G."/>
            <person name="Balakrishnan R."/>
            <person name="Costanzo M.C."/>
            <person name="Dwight S.S."/>
            <person name="Hitz B.C."/>
            <person name="Karra K."/>
            <person name="Nash R.S."/>
            <person name="Weng S."/>
            <person name="Wong E.D."/>
            <person name="Lloyd P."/>
            <person name="Skrzypek M.S."/>
            <person name="Miyasato S.R."/>
            <person name="Simison M."/>
            <person name="Cherry J.M."/>
        </authorList>
    </citation>
    <scope>GENOME REANNOTATION</scope>
    <source>
        <strain>ATCC 204508 / S288c</strain>
    </source>
</reference>
<reference key="3">
    <citation type="journal article" date="2003" name="Science">
        <title>Finding functional features in Saccharomyces genomes by phylogenetic footprinting.</title>
        <authorList>
            <person name="Cliften P.F."/>
            <person name="Sudarsanam P."/>
            <person name="Desikan A."/>
            <person name="Fulton L."/>
            <person name="Fulton B."/>
            <person name="Majors J."/>
            <person name="Waterston R."/>
            <person name="Cohen B.A."/>
            <person name="Johnston M."/>
        </authorList>
    </citation>
    <scope>GENOME REANNOTATION</scope>
</reference>
<sequence length="78" mass="9249">MSTAFRKIKLIFKKSDSQYPQNYRAEIKSRNKNTVITRHDLLIAHEMKQRASLERSNSIRNLQSQGKRRSDSKESRKL</sequence>
<feature type="chain" id="PRO_0000242692" description="Uncharacterized protein YPR145C-A">
    <location>
        <begin position="1"/>
        <end position="78"/>
    </location>
</feature>
<feature type="region of interest" description="Disordered" evidence="1">
    <location>
        <begin position="49"/>
        <end position="78"/>
    </location>
</feature>
<feature type="compositionally biased region" description="Polar residues" evidence="1">
    <location>
        <begin position="54"/>
        <end position="65"/>
    </location>
</feature>
<feature type="compositionally biased region" description="Basic and acidic residues" evidence="1">
    <location>
        <begin position="68"/>
        <end position="78"/>
    </location>
</feature>
<proteinExistence type="predicted"/>
<evidence type="ECO:0000256" key="1">
    <source>
        <dbReference type="SAM" id="MobiDB-lite"/>
    </source>
</evidence>
<dbReference type="EMBL" id="U40829">
    <property type="status" value="NOT_ANNOTATED_CDS"/>
    <property type="molecule type" value="Genomic_DNA"/>
</dbReference>
<dbReference type="EMBL" id="BK006949">
    <property type="protein sequence ID" value="DAA11559.1"/>
    <property type="molecule type" value="Genomic_DNA"/>
</dbReference>
<dbReference type="RefSeq" id="NP_001032572.1">
    <property type="nucleotide sequence ID" value="NM_001184687.1"/>
</dbReference>
<dbReference type="BioGRID" id="531949">
    <property type="interactions" value="1"/>
</dbReference>
<dbReference type="FunCoup" id="Q2V2P0">
    <property type="interactions" value="10"/>
</dbReference>
<dbReference type="iPTMnet" id="Q2V2P0"/>
<dbReference type="PaxDb" id="4932-YPR145C-A"/>
<dbReference type="PeptideAtlas" id="Q2V2P0"/>
<dbReference type="EnsemblFungi" id="YPR145C-A_mRNA">
    <property type="protein sequence ID" value="YPR145C-A"/>
    <property type="gene ID" value="YPR145C-A"/>
</dbReference>
<dbReference type="GeneID" id="3799978"/>
<dbReference type="KEGG" id="sce:YPR145C-A"/>
<dbReference type="AGR" id="SGD:S000113589"/>
<dbReference type="SGD" id="S000113589">
    <property type="gene designation" value="YPR145C-A"/>
</dbReference>
<dbReference type="VEuPathDB" id="FungiDB:YPR145C-A"/>
<dbReference type="HOGENOM" id="CLU_2623892_0_0_1"/>
<dbReference type="InParanoid" id="Q2V2P0"/>
<dbReference type="OrthoDB" id="4050564at2759"/>
<dbReference type="BioCyc" id="YEAST:G3O-34370-MONOMER"/>
<dbReference type="BioGRID-ORCS" id="3799978">
    <property type="hits" value="0 hits in 10 CRISPR screens"/>
</dbReference>
<dbReference type="PRO" id="PR:Q2V2P0"/>
<dbReference type="Proteomes" id="UP000002311">
    <property type="component" value="Chromosome XVI"/>
</dbReference>
<dbReference type="RNAct" id="Q2V2P0">
    <property type="molecule type" value="protein"/>
</dbReference>
<gene>
    <name type="ordered locus">YPR145C-A</name>
</gene>
<accession>Q2V2P0</accession>
<accession>D6W4E3</accession>
<protein>
    <recommendedName>
        <fullName>Uncharacterized protein YPR145C-A</fullName>
    </recommendedName>
</protein>
<keyword id="KW-1185">Reference proteome</keyword>